<dbReference type="EC" id="2.4.2.8" evidence="1"/>
<dbReference type="EMBL" id="CP000742">
    <property type="protein sequence ID" value="ABR55049.1"/>
    <property type="molecule type" value="Genomic_DNA"/>
</dbReference>
<dbReference type="RefSeq" id="WP_012065964.1">
    <property type="nucleotide sequence ID" value="NC_009634.1"/>
</dbReference>
<dbReference type="SMR" id="A6URC7"/>
<dbReference type="STRING" id="406327.Mevan_1150"/>
<dbReference type="GeneID" id="5325737"/>
<dbReference type="KEGG" id="mvn:Mevan_1150"/>
<dbReference type="eggNOG" id="arCOG00030">
    <property type="taxonomic scope" value="Archaea"/>
</dbReference>
<dbReference type="HOGENOM" id="CLU_126376_0_0_2"/>
<dbReference type="OrthoDB" id="8323at2157"/>
<dbReference type="UniPathway" id="UPA00591">
    <property type="reaction ID" value="UER00648"/>
</dbReference>
<dbReference type="Proteomes" id="UP000001107">
    <property type="component" value="Chromosome"/>
</dbReference>
<dbReference type="GO" id="GO:0005737">
    <property type="term" value="C:cytoplasm"/>
    <property type="evidence" value="ECO:0007669"/>
    <property type="project" value="UniProtKB-SubCell"/>
</dbReference>
<dbReference type="GO" id="GO:0052657">
    <property type="term" value="F:guanine phosphoribosyltransferase activity"/>
    <property type="evidence" value="ECO:0007669"/>
    <property type="project" value="RHEA"/>
</dbReference>
<dbReference type="GO" id="GO:0004422">
    <property type="term" value="F:hypoxanthine phosphoribosyltransferase activity"/>
    <property type="evidence" value="ECO:0007669"/>
    <property type="project" value="UniProtKB-UniRule"/>
</dbReference>
<dbReference type="GO" id="GO:0032264">
    <property type="term" value="P:IMP salvage"/>
    <property type="evidence" value="ECO:0007669"/>
    <property type="project" value="UniProtKB-UniRule"/>
</dbReference>
<dbReference type="GO" id="GO:0006166">
    <property type="term" value="P:purine ribonucleoside salvage"/>
    <property type="evidence" value="ECO:0007669"/>
    <property type="project" value="UniProtKB-KW"/>
</dbReference>
<dbReference type="CDD" id="cd06223">
    <property type="entry name" value="PRTases_typeI"/>
    <property type="match status" value="1"/>
</dbReference>
<dbReference type="Gene3D" id="3.40.50.2020">
    <property type="match status" value="1"/>
</dbReference>
<dbReference type="HAMAP" id="MF_01467">
    <property type="entry name" value="Hypx_phosphoribosyltr"/>
    <property type="match status" value="1"/>
</dbReference>
<dbReference type="InterPro" id="IPR026597">
    <property type="entry name" value="HGPRTase-like"/>
</dbReference>
<dbReference type="InterPro" id="IPR000836">
    <property type="entry name" value="PRibTrfase_dom"/>
</dbReference>
<dbReference type="InterPro" id="IPR029057">
    <property type="entry name" value="PRTase-like"/>
</dbReference>
<dbReference type="InterPro" id="IPR050118">
    <property type="entry name" value="Pur/Pyrimidine_PRTase"/>
</dbReference>
<dbReference type="NCBIfam" id="NF040646">
    <property type="entry name" value="HPT_Archaea"/>
    <property type="match status" value="1"/>
</dbReference>
<dbReference type="NCBIfam" id="NF002635">
    <property type="entry name" value="PRK02304.1-4"/>
    <property type="match status" value="1"/>
</dbReference>
<dbReference type="PANTHER" id="PTHR43864">
    <property type="entry name" value="HYPOXANTHINE/GUANINE PHOSPHORIBOSYLTRANSFERASE"/>
    <property type="match status" value="1"/>
</dbReference>
<dbReference type="PANTHER" id="PTHR43864:SF1">
    <property type="entry name" value="XANTHINE PHOSPHORIBOSYLTRANSFERASE"/>
    <property type="match status" value="1"/>
</dbReference>
<dbReference type="Pfam" id="PF00156">
    <property type="entry name" value="Pribosyltran"/>
    <property type="match status" value="1"/>
</dbReference>
<dbReference type="SUPFAM" id="SSF53271">
    <property type="entry name" value="PRTase-like"/>
    <property type="match status" value="1"/>
</dbReference>
<dbReference type="PROSITE" id="PS00103">
    <property type="entry name" value="PUR_PYR_PR_TRANSFER"/>
    <property type="match status" value="1"/>
</dbReference>
<organism>
    <name type="scientific">Methanococcus vannielii (strain ATCC 35089 / DSM 1224 / JCM 13029 / OCM 148 / SB)</name>
    <dbReference type="NCBI Taxonomy" id="406327"/>
    <lineage>
        <taxon>Archaea</taxon>
        <taxon>Methanobacteriati</taxon>
        <taxon>Methanobacteriota</taxon>
        <taxon>Methanomada group</taxon>
        <taxon>Methanococci</taxon>
        <taxon>Methanococcales</taxon>
        <taxon>Methanococcaceae</taxon>
        <taxon>Methanococcus</taxon>
    </lineage>
</organism>
<name>HPRT_METVS</name>
<proteinExistence type="inferred from homology"/>
<comment type="function">
    <text evidence="1">Catalyzes a salvage reaction resulting in the formation of IMP that is energically less costly than de novo synthesis.</text>
</comment>
<comment type="catalytic activity">
    <reaction evidence="1">
        <text>IMP + diphosphate = hypoxanthine + 5-phospho-alpha-D-ribose 1-diphosphate</text>
        <dbReference type="Rhea" id="RHEA:17973"/>
        <dbReference type="ChEBI" id="CHEBI:17368"/>
        <dbReference type="ChEBI" id="CHEBI:33019"/>
        <dbReference type="ChEBI" id="CHEBI:58017"/>
        <dbReference type="ChEBI" id="CHEBI:58053"/>
        <dbReference type="EC" id="2.4.2.8"/>
    </reaction>
</comment>
<comment type="catalytic activity">
    <reaction evidence="1">
        <text>GMP + diphosphate = guanine + 5-phospho-alpha-D-ribose 1-diphosphate</text>
        <dbReference type="Rhea" id="RHEA:25424"/>
        <dbReference type="ChEBI" id="CHEBI:16235"/>
        <dbReference type="ChEBI" id="CHEBI:33019"/>
        <dbReference type="ChEBI" id="CHEBI:58017"/>
        <dbReference type="ChEBI" id="CHEBI:58115"/>
        <dbReference type="EC" id="2.4.2.8"/>
    </reaction>
</comment>
<comment type="pathway">
    <text evidence="1">Purine metabolism; IMP biosynthesis via salvage pathway; IMP from hypoxanthine: step 1/1.</text>
</comment>
<comment type="subunit">
    <text evidence="1">Homodimer.</text>
</comment>
<comment type="subcellular location">
    <subcellularLocation>
        <location evidence="1">Cytoplasm</location>
    </subcellularLocation>
</comment>
<comment type="similarity">
    <text evidence="1">Belongs to the purine/pyrimidine phosphoribosyltransferase family. Archaeal HPRT subfamily.</text>
</comment>
<feature type="chain" id="PRO_0000329377" description="Hypoxanthine/guanine phosphoribosyltransferase">
    <location>
        <begin position="1"/>
        <end position="185"/>
    </location>
</feature>
<gene>
    <name evidence="1" type="primary">hpt</name>
    <name type="ordered locus">Mevan_1150</name>
</gene>
<evidence type="ECO:0000255" key="1">
    <source>
        <dbReference type="HAMAP-Rule" id="MF_01467"/>
    </source>
</evidence>
<sequence length="185" mass="20452">MKRLLENSLETCPIVKRGPYHYFIHPISDGVPLVEPELLRDVSTRVIKMIDTNVDKIVTAEAMGIPIVTAVSIATDIPYVIMRKREYLLEGEVPVHQETGYSKGELYLNGINKGDKVVILDDVISTGGTLVAIIRALKRAGADIKDVVCIIDRGQGKNIVEKETGYKVKTLVKIEVVDGKVKILE</sequence>
<accession>A6URC7</accession>
<keyword id="KW-0963">Cytoplasm</keyword>
<keyword id="KW-0328">Glycosyltransferase</keyword>
<keyword id="KW-0660">Purine salvage</keyword>
<keyword id="KW-0808">Transferase</keyword>
<reference key="1">
    <citation type="submission" date="2007-06" db="EMBL/GenBank/DDBJ databases">
        <title>Complete sequence of Methanococcus vannielii SB.</title>
        <authorList>
            <consortium name="US DOE Joint Genome Institute"/>
            <person name="Copeland A."/>
            <person name="Lucas S."/>
            <person name="Lapidus A."/>
            <person name="Barry K."/>
            <person name="Glavina del Rio T."/>
            <person name="Dalin E."/>
            <person name="Tice H."/>
            <person name="Pitluck S."/>
            <person name="Chain P."/>
            <person name="Malfatti S."/>
            <person name="Shin M."/>
            <person name="Vergez L."/>
            <person name="Schmutz J."/>
            <person name="Larimer F."/>
            <person name="Land M."/>
            <person name="Hauser L."/>
            <person name="Kyrpides N."/>
            <person name="Anderson I."/>
            <person name="Sieprawska-Lupa M."/>
            <person name="Whitman W.B."/>
            <person name="Richardson P."/>
        </authorList>
    </citation>
    <scope>NUCLEOTIDE SEQUENCE [LARGE SCALE GENOMIC DNA]</scope>
    <source>
        <strain>ATCC 35089 / DSM 1224 / JCM 13029 / OCM 148 / SB</strain>
    </source>
</reference>
<protein>
    <recommendedName>
        <fullName evidence="1">Hypoxanthine/guanine phosphoribosyltransferase</fullName>
        <shortName evidence="1">HGPRTase</shortName>
        <ecNumber evidence="1">2.4.2.8</ecNumber>
    </recommendedName>
</protein>